<evidence type="ECO:0000255" key="1">
    <source>
        <dbReference type="HAMAP-Rule" id="MF_01457"/>
    </source>
</evidence>
<reference key="1">
    <citation type="submission" date="2008-03" db="EMBL/GenBank/DDBJ databases">
        <title>Complete sequence of Leptothrix cholodnii SP-6.</title>
        <authorList>
            <consortium name="US DOE Joint Genome Institute"/>
            <person name="Copeland A."/>
            <person name="Lucas S."/>
            <person name="Lapidus A."/>
            <person name="Glavina del Rio T."/>
            <person name="Dalin E."/>
            <person name="Tice H."/>
            <person name="Bruce D."/>
            <person name="Goodwin L."/>
            <person name="Pitluck S."/>
            <person name="Chertkov O."/>
            <person name="Brettin T."/>
            <person name="Detter J.C."/>
            <person name="Han C."/>
            <person name="Kuske C.R."/>
            <person name="Schmutz J."/>
            <person name="Larimer F."/>
            <person name="Land M."/>
            <person name="Hauser L."/>
            <person name="Kyrpides N."/>
            <person name="Lykidis A."/>
            <person name="Emerson D."/>
            <person name="Richardson P."/>
        </authorList>
    </citation>
    <scope>NUCLEOTIDE SEQUENCE [LARGE SCALE GENOMIC DNA]</scope>
    <source>
        <strain>ATCC 51168 / LMG 8142 / SP-6</strain>
    </source>
</reference>
<sequence length="251" mass="27517">MSTQPMPLSLTDAKPGQGEYRVRAGSEIRALLRRFADEELPITLATPDGVSYTTCLWADDPERAVLVLSADAADARVQRLIEAEEAVAVGYLDSVKIQFDLNGLMLVHGRDASALHAQFPREIYRFQRRDGFRVRPVGHACPELQLRVSGPTDTELTLRVLDLSHGGLALFLPDDQPALPVGTSVRAARLALDPLTQVQVALRVVHVAPLKESAHGSRLGCEIEGLSGVASRTLQRYIDQTQKRRRLLAVS</sequence>
<organism>
    <name type="scientific">Leptothrix cholodnii (strain ATCC 51168 / LMG 8142 / SP-6)</name>
    <name type="common">Leptothrix discophora (strain SP-6)</name>
    <dbReference type="NCBI Taxonomy" id="395495"/>
    <lineage>
        <taxon>Bacteria</taxon>
        <taxon>Pseudomonadati</taxon>
        <taxon>Pseudomonadota</taxon>
        <taxon>Betaproteobacteria</taxon>
        <taxon>Burkholderiales</taxon>
        <taxon>Sphaerotilaceae</taxon>
        <taxon>Leptothrix</taxon>
    </lineage>
</organism>
<feature type="chain" id="PRO_0000395276" description="Flagellar brake protein YcgR">
    <location>
        <begin position="1"/>
        <end position="251"/>
    </location>
</feature>
<feature type="domain" description="PilZ" evidence="1">
    <location>
        <begin position="127"/>
        <end position="239"/>
    </location>
</feature>
<proteinExistence type="inferred from homology"/>
<comment type="function">
    <text evidence="1">Acts as a flagellar brake, regulating swimming and swarming in a bis-(3'-5') cyclic diguanylic acid (c-di-GMP)-dependent manner. Binds 1 c-di-GMP dimer per subunit. Increasing levels of c-di-GMP lead to decreased motility.</text>
</comment>
<comment type="subunit">
    <text evidence="1">Monomer. Interacts with the flagellar basal bodies.</text>
</comment>
<comment type="subcellular location">
    <subcellularLocation>
        <location evidence="1">Bacterial flagellum basal body</location>
    </subcellularLocation>
</comment>
<comment type="similarity">
    <text evidence="1">Belongs to the YcgR family.</text>
</comment>
<accession>B1Y382</accession>
<name>YCGR_LEPCP</name>
<gene>
    <name evidence="1" type="primary">ycgR</name>
    <name type="ordered locus">Lcho_1014</name>
</gene>
<protein>
    <recommendedName>
        <fullName evidence="1">Flagellar brake protein YcgR</fullName>
    </recommendedName>
    <alternativeName>
        <fullName evidence="1">Cyclic di-GMP binding protein YcgR</fullName>
    </alternativeName>
</protein>
<dbReference type="EMBL" id="CP001013">
    <property type="protein sequence ID" value="ACB33285.1"/>
    <property type="molecule type" value="Genomic_DNA"/>
</dbReference>
<dbReference type="RefSeq" id="WP_012346047.1">
    <property type="nucleotide sequence ID" value="NC_010524.1"/>
</dbReference>
<dbReference type="SMR" id="B1Y382"/>
<dbReference type="STRING" id="395495.Lcho_1014"/>
<dbReference type="KEGG" id="lch:Lcho_1014"/>
<dbReference type="eggNOG" id="COG5581">
    <property type="taxonomic scope" value="Bacteria"/>
</dbReference>
<dbReference type="HOGENOM" id="CLU_086025_0_0_4"/>
<dbReference type="OrthoDB" id="5572581at2"/>
<dbReference type="Proteomes" id="UP000001693">
    <property type="component" value="Chromosome"/>
</dbReference>
<dbReference type="GO" id="GO:0009425">
    <property type="term" value="C:bacterial-type flagellum basal body"/>
    <property type="evidence" value="ECO:0007669"/>
    <property type="project" value="UniProtKB-SubCell"/>
</dbReference>
<dbReference type="GO" id="GO:0035438">
    <property type="term" value="F:cyclic-di-GMP binding"/>
    <property type="evidence" value="ECO:0007669"/>
    <property type="project" value="UniProtKB-UniRule"/>
</dbReference>
<dbReference type="GO" id="GO:0071973">
    <property type="term" value="P:bacterial-type flagellum-dependent cell motility"/>
    <property type="evidence" value="ECO:0007669"/>
    <property type="project" value="UniProtKB-UniRule"/>
</dbReference>
<dbReference type="GO" id="GO:0071945">
    <property type="term" value="P:regulation of bacterial-type flagellum-dependent cell motility by regulation of motor speed"/>
    <property type="evidence" value="ECO:0007669"/>
    <property type="project" value="UniProtKB-UniRule"/>
</dbReference>
<dbReference type="Gene3D" id="2.30.110.10">
    <property type="entry name" value="Electron Transport, Fmn-binding Protein, Chain A"/>
    <property type="match status" value="1"/>
</dbReference>
<dbReference type="Gene3D" id="2.40.10.220">
    <property type="entry name" value="predicted glycosyltransferase like domains"/>
    <property type="match status" value="1"/>
</dbReference>
<dbReference type="HAMAP" id="MF_01457">
    <property type="entry name" value="YcgR"/>
    <property type="match status" value="1"/>
</dbReference>
<dbReference type="InterPro" id="IPR009875">
    <property type="entry name" value="PilZ_domain"/>
</dbReference>
<dbReference type="InterPro" id="IPR012349">
    <property type="entry name" value="Split_barrel_FMN-bd"/>
</dbReference>
<dbReference type="InterPro" id="IPR023787">
    <property type="entry name" value="T3SS_YcgR"/>
</dbReference>
<dbReference type="InterPro" id="IPR009926">
    <property type="entry name" value="T3SS_YcgR_PilZN"/>
</dbReference>
<dbReference type="Pfam" id="PF07238">
    <property type="entry name" value="PilZ"/>
    <property type="match status" value="1"/>
</dbReference>
<dbReference type="Pfam" id="PF07317">
    <property type="entry name" value="PilZN"/>
    <property type="match status" value="1"/>
</dbReference>
<dbReference type="SUPFAM" id="SSF141371">
    <property type="entry name" value="PilZ domain-like"/>
    <property type="match status" value="1"/>
</dbReference>
<keyword id="KW-0975">Bacterial flagellum</keyword>
<keyword id="KW-0973">c-di-GMP</keyword>
<keyword id="KW-0547">Nucleotide-binding</keyword>
<keyword id="KW-1185">Reference proteome</keyword>